<proteinExistence type="inferred from homology"/>
<comment type="function">
    <text evidence="2">Component of the acetyl coenzyme A carboxylase (ACC) complex. Biotin carboxylase (BC) catalyzes the carboxylation of biotin on its carrier protein (BCCP) and then the CO(2) group is transferred by the transcarboxylase to acetyl-CoA to form malonyl-CoA.</text>
</comment>
<comment type="catalytic activity">
    <reaction evidence="2">
        <text>N(6)-carboxybiotinyl-L-lysyl-[protein] + acetyl-CoA = N(6)-biotinyl-L-lysyl-[protein] + malonyl-CoA</text>
        <dbReference type="Rhea" id="RHEA:54728"/>
        <dbReference type="Rhea" id="RHEA-COMP:10505"/>
        <dbReference type="Rhea" id="RHEA-COMP:10506"/>
        <dbReference type="ChEBI" id="CHEBI:57288"/>
        <dbReference type="ChEBI" id="CHEBI:57384"/>
        <dbReference type="ChEBI" id="CHEBI:83144"/>
        <dbReference type="ChEBI" id="CHEBI:83145"/>
        <dbReference type="EC" id="2.1.3.15"/>
    </reaction>
</comment>
<comment type="cofactor">
    <cofactor evidence="2">
        <name>Zn(2+)</name>
        <dbReference type="ChEBI" id="CHEBI:29105"/>
    </cofactor>
    <text evidence="2">Binds 1 zinc ion per subunit.</text>
</comment>
<comment type="pathway">
    <text evidence="2">Lipid metabolism; malonyl-CoA biosynthesis; malonyl-CoA from acetyl-CoA: step 1/1.</text>
</comment>
<comment type="subunit">
    <text evidence="1">Acetyl-CoA carboxylase is a heterohexamer composed of biotin carboxyl carrier protein, biotin carboxylase and 2 subunits each of ACCase subunit alpha and ACCase plastid-coded subunit beta (accD).</text>
</comment>
<comment type="subcellular location">
    <subcellularLocation>
        <location evidence="2">Plastid</location>
        <location evidence="2">Chloroplast stroma</location>
    </subcellularLocation>
</comment>
<comment type="similarity">
    <text evidence="2">Belongs to the AccD/PCCB family.</text>
</comment>
<sequence>MEKSWFNLILSKGELEYRCGLSKSMDSRLGPVENTTVNEDPTRNDTDKNIHDCSDSSSYYSKVDHLVDVKDIRNFISDDTFLIRDSNQDRYSIYFDSENQIFELNNDHSFLSELESFFYSYHNSSYMNNGSKNDEPHYHFNLYDNDTNCGWNNHINSCIDSYLRSQICIDSSILSGSDNSNDNYISNYICGEGGNSSEGKNFDIITRENGNDLTLKESSNDLDLYKDLWVQCECENCYGVNYKKSLNSKMNICEQCGYHLKMRSSDRIELSIDPGTWGPMDEDMISLDPIEFQSEEELYKDRIDFYQRKTGLTEAIQTGTGQLNGIPIAIGVMDFQFMGGSMGSVVGEKITRLIEYATNNFLPLILVCASGGARMQEGSLSLMQMAKISSALYDYQSNKKLFYVSILTSPTTGGVTASFGMLGDIIIAEPNAYIAFAGKRVIEQTLNKTIPEGSQAAEYLFHKGLFDPIVPRNPLKGVLSELVQLHGFFPLNQNSIK</sequence>
<reference key="1">
    <citation type="journal article" date="2006" name="BMC Genomics">
        <title>The complete chloroplast genome sequence of Gossypium hirsutum: organization and phylogenetic relationships to other angiosperms.</title>
        <authorList>
            <person name="Lee S.-B."/>
            <person name="Kaittanis C."/>
            <person name="Jansen R.K."/>
            <person name="Hostetler J.B."/>
            <person name="Tallon L.J."/>
            <person name="Town C.D."/>
            <person name="Daniell H."/>
        </authorList>
    </citation>
    <scope>NUCLEOTIDE SEQUENCE [LARGE SCALE GENOMIC DNA]</scope>
    <source>
        <strain>cv. Coker 310FR</strain>
    </source>
</reference>
<gene>
    <name evidence="2" type="primary">accD</name>
</gene>
<organism>
    <name type="scientific">Gossypium hirsutum</name>
    <name type="common">Upland cotton</name>
    <name type="synonym">Gossypium mexicanum</name>
    <dbReference type="NCBI Taxonomy" id="3635"/>
    <lineage>
        <taxon>Eukaryota</taxon>
        <taxon>Viridiplantae</taxon>
        <taxon>Streptophyta</taxon>
        <taxon>Embryophyta</taxon>
        <taxon>Tracheophyta</taxon>
        <taxon>Spermatophyta</taxon>
        <taxon>Magnoliopsida</taxon>
        <taxon>eudicotyledons</taxon>
        <taxon>Gunneridae</taxon>
        <taxon>Pentapetalae</taxon>
        <taxon>rosids</taxon>
        <taxon>malvids</taxon>
        <taxon>Malvales</taxon>
        <taxon>Malvaceae</taxon>
        <taxon>Malvoideae</taxon>
        <taxon>Gossypium</taxon>
    </lineage>
</organism>
<protein>
    <recommendedName>
        <fullName evidence="2">Acetyl-coenzyme A carboxylase carboxyl transferase subunit beta, chloroplastic</fullName>
        <shortName evidence="2">ACCase subunit beta</shortName>
        <shortName evidence="2">Acetyl-CoA carboxylase carboxyltransferase subunit beta</shortName>
        <ecNumber evidence="2">2.1.3.15</ecNumber>
    </recommendedName>
</protein>
<feature type="chain" id="PRO_0000359141" description="Acetyl-coenzyme A carboxylase carboxyl transferase subunit beta, chloroplastic">
    <location>
        <begin position="1"/>
        <end position="497"/>
    </location>
</feature>
<feature type="domain" description="CoA carboxyltransferase N-terminal" evidence="3">
    <location>
        <begin position="230"/>
        <end position="497"/>
    </location>
</feature>
<feature type="zinc finger region" description="C4-type" evidence="2">
    <location>
        <begin position="232"/>
        <end position="256"/>
    </location>
</feature>
<feature type="region of interest" description="Disordered" evidence="4">
    <location>
        <begin position="30"/>
        <end position="50"/>
    </location>
</feature>
<feature type="compositionally biased region" description="Basic and acidic residues" evidence="4">
    <location>
        <begin position="40"/>
        <end position="50"/>
    </location>
</feature>
<feature type="binding site" evidence="2">
    <location>
        <position position="232"/>
    </location>
    <ligand>
        <name>Zn(2+)</name>
        <dbReference type="ChEBI" id="CHEBI:29105"/>
    </ligand>
</feature>
<feature type="binding site" evidence="2">
    <location>
        <position position="237"/>
    </location>
    <ligand>
        <name>Zn(2+)</name>
        <dbReference type="ChEBI" id="CHEBI:29105"/>
    </ligand>
</feature>
<feature type="binding site" evidence="2">
    <location>
        <position position="253"/>
    </location>
    <ligand>
        <name>Zn(2+)</name>
        <dbReference type="ChEBI" id="CHEBI:29105"/>
    </ligand>
</feature>
<feature type="binding site" evidence="2">
    <location>
        <position position="256"/>
    </location>
    <ligand>
        <name>Zn(2+)</name>
        <dbReference type="ChEBI" id="CHEBI:29105"/>
    </ligand>
</feature>
<dbReference type="EC" id="2.1.3.15" evidence="2"/>
<dbReference type="EMBL" id="DQ345959">
    <property type="protein sequence ID" value="ABC73637.1"/>
    <property type="molecule type" value="Genomic_DNA"/>
</dbReference>
<dbReference type="RefSeq" id="YP_538944.1">
    <property type="nucleotide sequence ID" value="NC_007944.1"/>
</dbReference>
<dbReference type="SMR" id="Q2L915"/>
<dbReference type="GeneID" id="3989158"/>
<dbReference type="KEGG" id="ghi:3989158"/>
<dbReference type="OrthoDB" id="58892at41938"/>
<dbReference type="UniPathway" id="UPA00655">
    <property type="reaction ID" value="UER00711"/>
</dbReference>
<dbReference type="Proteomes" id="UP000189702">
    <property type="component" value="Chloroplast Pltd"/>
</dbReference>
<dbReference type="GO" id="GO:0009317">
    <property type="term" value="C:acetyl-CoA carboxylase complex"/>
    <property type="evidence" value="ECO:0007669"/>
    <property type="project" value="InterPro"/>
</dbReference>
<dbReference type="GO" id="GO:0009570">
    <property type="term" value="C:chloroplast stroma"/>
    <property type="evidence" value="ECO:0007669"/>
    <property type="project" value="UniProtKB-SubCell"/>
</dbReference>
<dbReference type="GO" id="GO:0003989">
    <property type="term" value="F:acetyl-CoA carboxylase activity"/>
    <property type="evidence" value="ECO:0007669"/>
    <property type="project" value="InterPro"/>
</dbReference>
<dbReference type="GO" id="GO:0005524">
    <property type="term" value="F:ATP binding"/>
    <property type="evidence" value="ECO:0007669"/>
    <property type="project" value="UniProtKB-KW"/>
</dbReference>
<dbReference type="GO" id="GO:0016743">
    <property type="term" value="F:carboxyl- or carbamoyltransferase activity"/>
    <property type="evidence" value="ECO:0007669"/>
    <property type="project" value="UniProtKB-UniRule"/>
</dbReference>
<dbReference type="GO" id="GO:0008270">
    <property type="term" value="F:zinc ion binding"/>
    <property type="evidence" value="ECO:0007669"/>
    <property type="project" value="UniProtKB-UniRule"/>
</dbReference>
<dbReference type="GO" id="GO:0006633">
    <property type="term" value="P:fatty acid biosynthetic process"/>
    <property type="evidence" value="ECO:0000318"/>
    <property type="project" value="GO_Central"/>
</dbReference>
<dbReference type="GO" id="GO:2001295">
    <property type="term" value="P:malonyl-CoA biosynthetic process"/>
    <property type="evidence" value="ECO:0007669"/>
    <property type="project" value="UniProtKB-UniRule"/>
</dbReference>
<dbReference type="Gene3D" id="3.90.226.10">
    <property type="entry name" value="2-enoyl-CoA Hydratase, Chain A, domain 1"/>
    <property type="match status" value="1"/>
</dbReference>
<dbReference type="HAMAP" id="MF_01395">
    <property type="entry name" value="AcetylCoA_CT_beta"/>
    <property type="match status" value="1"/>
</dbReference>
<dbReference type="InterPro" id="IPR034733">
    <property type="entry name" value="AcCoA_carboxyl_beta"/>
</dbReference>
<dbReference type="InterPro" id="IPR000438">
    <property type="entry name" value="Acetyl_CoA_COase_Trfase_b_su"/>
</dbReference>
<dbReference type="InterPro" id="IPR029045">
    <property type="entry name" value="ClpP/crotonase-like_dom_sf"/>
</dbReference>
<dbReference type="InterPro" id="IPR011762">
    <property type="entry name" value="COA_CT_N"/>
</dbReference>
<dbReference type="NCBIfam" id="TIGR00515">
    <property type="entry name" value="accD"/>
    <property type="match status" value="1"/>
</dbReference>
<dbReference type="PANTHER" id="PTHR42995">
    <property type="entry name" value="ACETYL-COENZYME A CARBOXYLASE CARBOXYL TRANSFERASE SUBUNIT BETA, CHLOROPLASTIC"/>
    <property type="match status" value="1"/>
</dbReference>
<dbReference type="PANTHER" id="PTHR42995:SF5">
    <property type="entry name" value="ACETYL-COENZYME A CARBOXYLASE CARBOXYL TRANSFERASE SUBUNIT BETA, CHLOROPLASTIC"/>
    <property type="match status" value="1"/>
</dbReference>
<dbReference type="Pfam" id="PF01039">
    <property type="entry name" value="Carboxyl_trans"/>
    <property type="match status" value="1"/>
</dbReference>
<dbReference type="PRINTS" id="PR01070">
    <property type="entry name" value="ACCCTRFRASEB"/>
</dbReference>
<dbReference type="SUPFAM" id="SSF52096">
    <property type="entry name" value="ClpP/crotonase"/>
    <property type="match status" value="1"/>
</dbReference>
<dbReference type="PROSITE" id="PS50980">
    <property type="entry name" value="COA_CT_NTER"/>
    <property type="match status" value="1"/>
</dbReference>
<geneLocation type="chloroplast"/>
<name>ACCD_GOSHI</name>
<evidence type="ECO:0000250" key="1"/>
<evidence type="ECO:0000255" key="2">
    <source>
        <dbReference type="HAMAP-Rule" id="MF_01395"/>
    </source>
</evidence>
<evidence type="ECO:0000255" key="3">
    <source>
        <dbReference type="PROSITE-ProRule" id="PRU01136"/>
    </source>
</evidence>
<evidence type="ECO:0000256" key="4">
    <source>
        <dbReference type="SAM" id="MobiDB-lite"/>
    </source>
</evidence>
<accession>Q2L915</accession>
<keyword id="KW-0067">ATP-binding</keyword>
<keyword id="KW-0150">Chloroplast</keyword>
<keyword id="KW-0275">Fatty acid biosynthesis</keyword>
<keyword id="KW-0276">Fatty acid metabolism</keyword>
<keyword id="KW-0444">Lipid biosynthesis</keyword>
<keyword id="KW-0443">Lipid metabolism</keyword>
<keyword id="KW-0479">Metal-binding</keyword>
<keyword id="KW-0547">Nucleotide-binding</keyword>
<keyword id="KW-0934">Plastid</keyword>
<keyword id="KW-1185">Reference proteome</keyword>
<keyword id="KW-0808">Transferase</keyword>
<keyword id="KW-0862">Zinc</keyword>
<keyword id="KW-0863">Zinc-finger</keyword>